<reference key="1">
    <citation type="journal article" date="1991" name="Virology">
        <title>Limited sequence variation in human T-lymphotropic virus type 1 isolates from North American and African patients.</title>
        <authorList>
            <person name="Paine E."/>
            <person name="Garcia J."/>
            <person name="Philpott T.C."/>
            <person name="Shaw G."/>
            <person name="Ratner L."/>
        </authorList>
    </citation>
    <scope>NUCLEOTIDE SEQUENCE [GENOMIC RNA]</scope>
</reference>
<name>ENV_HTL1N</name>
<proteinExistence type="inferred from homology"/>
<protein>
    <recommendedName>
        <fullName>Envelope glycoprotein gp62</fullName>
    </recommendedName>
    <alternativeName>
        <fullName>Env polyprotein</fullName>
    </alternativeName>
    <component>
        <recommendedName>
            <fullName>Surface protein</fullName>
            <shortName>SU</shortName>
        </recommendedName>
        <alternativeName>
            <fullName>Glycoprotein 46</fullName>
            <shortName>gp46</shortName>
        </alternativeName>
    </component>
    <component>
        <recommendedName>
            <fullName>Transmembrane protein</fullName>
            <shortName>TM</shortName>
        </recommendedName>
        <alternativeName>
            <fullName>Glycoprotein 21</fullName>
            <shortName>gp21</shortName>
        </alternativeName>
    </component>
</protein>
<keyword id="KW-0165">Cleavage on pair of basic residues</keyword>
<keyword id="KW-0175">Coiled coil</keyword>
<keyword id="KW-1015">Disulfide bond</keyword>
<keyword id="KW-1169">Fusion of virus membrane with host cell membrane</keyword>
<keyword id="KW-1168">Fusion of virus membrane with host membrane</keyword>
<keyword id="KW-0325">Glycoprotein</keyword>
<keyword id="KW-1032">Host cell membrane</keyword>
<keyword id="KW-1043">Host membrane</keyword>
<keyword id="KW-0945">Host-virus interaction</keyword>
<keyword id="KW-0449">Lipoprotein</keyword>
<keyword id="KW-0472">Membrane</keyword>
<keyword id="KW-0564">Palmitate</keyword>
<keyword id="KW-0732">Signal</keyword>
<keyword id="KW-0812">Transmembrane</keyword>
<keyword id="KW-1133">Transmembrane helix</keyword>
<keyword id="KW-1161">Viral attachment to host cell</keyword>
<keyword id="KW-0261">Viral envelope protein</keyword>
<keyword id="KW-1162">Viral penetration into host cytoplasm</keyword>
<keyword id="KW-0946">Virion</keyword>
<keyword id="KW-1160">Virus entry into host cell</keyword>
<organism>
    <name type="scientific">Human T-cell leukemia virus 1 (isolate Caribbea CH subtype A)</name>
    <name type="common">HTLV-1</name>
    <dbReference type="NCBI Taxonomy" id="39016"/>
    <lineage>
        <taxon>Viruses</taxon>
        <taxon>Riboviria</taxon>
        <taxon>Pararnavirae</taxon>
        <taxon>Artverviricota</taxon>
        <taxon>Revtraviricetes</taxon>
        <taxon>Ortervirales</taxon>
        <taxon>Retroviridae</taxon>
        <taxon>Orthoretrovirinae</taxon>
        <taxon>Deltaretrovirus</taxon>
        <taxon>Primate T-lymphotropic virus 1</taxon>
    </lineage>
</organism>
<accession>Q03816</accession>
<gene>
    <name type="primary">env</name>
</gene>
<dbReference type="EMBL" id="M67490">
    <property type="protein sequence ID" value="AAA46187.1"/>
    <property type="molecule type" value="Genomic_RNA"/>
</dbReference>
<dbReference type="SMR" id="Q03816"/>
<dbReference type="GlyCosmos" id="Q03816">
    <property type="glycosylation" value="5 sites, No reported glycans"/>
</dbReference>
<dbReference type="GO" id="GO:0020002">
    <property type="term" value="C:host cell plasma membrane"/>
    <property type="evidence" value="ECO:0007669"/>
    <property type="project" value="UniProtKB-SubCell"/>
</dbReference>
<dbReference type="GO" id="GO:0016020">
    <property type="term" value="C:membrane"/>
    <property type="evidence" value="ECO:0007669"/>
    <property type="project" value="UniProtKB-KW"/>
</dbReference>
<dbReference type="GO" id="GO:0019031">
    <property type="term" value="C:viral envelope"/>
    <property type="evidence" value="ECO:0007669"/>
    <property type="project" value="UniProtKB-KW"/>
</dbReference>
<dbReference type="GO" id="GO:0055036">
    <property type="term" value="C:virion membrane"/>
    <property type="evidence" value="ECO:0007669"/>
    <property type="project" value="UniProtKB-SubCell"/>
</dbReference>
<dbReference type="GO" id="GO:0019064">
    <property type="term" value="P:fusion of virus membrane with host plasma membrane"/>
    <property type="evidence" value="ECO:0007669"/>
    <property type="project" value="UniProtKB-KW"/>
</dbReference>
<dbReference type="GO" id="GO:0046718">
    <property type="term" value="P:symbiont entry into host cell"/>
    <property type="evidence" value="ECO:0007669"/>
    <property type="project" value="UniProtKB-KW"/>
</dbReference>
<dbReference type="GO" id="GO:0019062">
    <property type="term" value="P:virion attachment to host cell"/>
    <property type="evidence" value="ECO:0007669"/>
    <property type="project" value="UniProtKB-KW"/>
</dbReference>
<dbReference type="CDD" id="cd09851">
    <property type="entry name" value="HTLV-1-like_HR1-HR2"/>
    <property type="match status" value="1"/>
</dbReference>
<dbReference type="Gene3D" id="1.10.287.210">
    <property type="match status" value="1"/>
</dbReference>
<dbReference type="InterPro" id="IPR018154">
    <property type="entry name" value="TLV/ENV_coat_polyprotein"/>
</dbReference>
<dbReference type="PANTHER" id="PTHR10424:SF81">
    <property type="entry name" value="ERVV2 PROTEIN"/>
    <property type="match status" value="1"/>
</dbReference>
<dbReference type="PANTHER" id="PTHR10424">
    <property type="entry name" value="VIRAL ENVELOPE PROTEIN"/>
    <property type="match status" value="1"/>
</dbReference>
<dbReference type="Pfam" id="PF00429">
    <property type="entry name" value="TLV_coat"/>
    <property type="match status" value="2"/>
</dbReference>
<dbReference type="SUPFAM" id="SSF58069">
    <property type="entry name" value="Virus ectodomain"/>
    <property type="match status" value="1"/>
</dbReference>
<comment type="function">
    <text evidence="1">The surface protein (SU) attaches the virus to the host cell by binding to its receptor. This interaction triggers the refolding of the transmembrane protein (TM) and is thought to activate its fusogenic potential by unmasking its fusion peptide. Fusion occurs at the host cell plasma membrane (By similarity).</text>
</comment>
<comment type="function">
    <text evidence="1">The transmembrane protein (TM) acts as a class I viral fusion protein. Under the current model, the protein has at least 3 conformational states: pre-fusion native state, pre-hairpin intermediate state, and post-fusion hairpin state. During viral and target cell membrane fusion, the coiled coil regions (heptad repeats) assume a trimer-of-hairpins structure, positioning the fusion peptide in close proximity to the C-terminal region of the ectodomain. The formation of this structure appears to drive apposition and subsequent fusion of viral and target cell membranes. Membranes fusion leads to delivery of the nucleocapsid into the cytoplasm (By similarity).</text>
</comment>
<comment type="subunit">
    <text evidence="1">The mature envelope protein (Env) consists of a trimer of SU-TM heterodimers attached by a labile interchain disulfide bond.</text>
</comment>
<comment type="subcellular location">
    <molecule>Transmembrane protein</molecule>
    <subcellularLocation>
        <location evidence="1">Virion membrane</location>
        <topology evidence="1">Single-pass type I membrane protein</topology>
    </subcellularLocation>
    <subcellularLocation>
        <location evidence="1">Host cell membrane</location>
        <topology evidence="1">Single-pass type I membrane protein</topology>
    </subcellularLocation>
    <text evidence="1">It is probably concentrated at the site of budding and incorporated into the virions possibly by contacts between the cytoplasmic tail of Env and the N-terminus of Gag.</text>
</comment>
<comment type="subcellular location">
    <molecule>Surface protein</molecule>
    <subcellularLocation>
        <location evidence="1">Virion membrane</location>
        <topology evidence="1">Peripheral membrane protein</topology>
    </subcellularLocation>
    <subcellularLocation>
        <location evidence="1">Host cell membrane</location>
        <topology evidence="1">Peripheral membrane protein</topology>
    </subcellularLocation>
    <text evidence="1">The surface protein is not anchored to the viral envelope, but associates with the extravirion surface through its binding to TM. It is probably concentrated at the site of budding and incorporated into the virions possibly by contacts between the cytoplasmic tail of Env and the N-terminus of Gag (By similarity).</text>
</comment>
<comment type="domain">
    <text evidence="1">The 17 amino acids long immunosuppressive region is present in many retroviral envelope proteins. Synthetic peptides derived from this relatively conserved sequence inhibit immune function in vitro and in vivo (By similarity).</text>
</comment>
<comment type="PTM">
    <text evidence="1">Specific enzymatic cleavages in vivo yield mature proteins. Envelope glycoproteins are synthesized as an inactive precursor that is N-glycosylated and processed likely by host cell furin or by a furin-like protease in the Golgi to yield the mature SU and TM proteins. The cleavage site between SU and TM requires the minimal sequence [KR]-X-[KR]-R (By similarity).</text>
</comment>
<comment type="PTM">
    <text evidence="1">The CXXC motif is highly conserved across a broad range of retroviral envelope proteins. It is thought to participate in the formation of a labile disulfide bond possibly with the CX6CC motif present in the transmembrane protein. Isomerization of the intersubunit disulfide bond to an SU intrachain disulfide bond is thought to occur upon receptor recognition in order to allow membrane fusion (By similarity).</text>
</comment>
<comment type="PTM">
    <text evidence="1">The transmembrane protein is palmitoylated.</text>
</comment>
<comment type="miscellaneous">
    <text>HTLV-1 lineages are divided in four clades, A (Cosmopolitan), B (Central African group), C (Melanesian group) and D (New Central African group).</text>
</comment>
<evidence type="ECO:0000250" key="1"/>
<evidence type="ECO:0000255" key="2"/>
<organismHost>
    <name type="scientific">Homo sapiens</name>
    <name type="common">Human</name>
    <dbReference type="NCBI Taxonomy" id="9606"/>
</organismHost>
<sequence length="488" mass="53870">MGKFLATLILFFQFCPLILGDYSPSCCTLTIGVSSYHSKPCNPAQPVCSWTLDLLALSADQALQPPCPNLVAYSSYHATYSLYLFPHWIKKPNRNGGGYYSASYSDPCSLKCPYLGCQSWTCPYTGAVSSPYWKFQQDVNFTQEVSRLNINLHFSKCGFPFSLLVDAPGYDPIWFLNTEPSQLPPTTPPLLPHSNLDHILEPSIPWKSKLLTLVQLTLQSTNYTCIVCIDRASLSTWHVLYSPNVSVPSSSSTPLLYPSLALPAPHLTLPFNWTHCFDPQIQAIVSSPCHNSLILPPFSLSPVPTLGSRSRRAVPVAVWLVSALAIGAGVAGGITGSMSLASGKSLLHEVDKDISQLTQAIVKNHKNLLKIAQYAAQNRRGLDLLFWEQGGLCKALQEQCCFLNITNSHVSMLQERPPLENRVLTGWGLNWDLGLSQWAREALQTGITLVALLLLVILAGPCILRQLRHLPSRVRYPHYSLINPESSL</sequence>
<feature type="signal peptide" evidence="2">
    <location>
        <begin position="1"/>
        <end position="20"/>
    </location>
</feature>
<feature type="chain" id="PRO_0000038758" description="Envelope glycoprotein gp62">
    <location>
        <begin position="21"/>
        <end position="488"/>
    </location>
</feature>
<feature type="chain" id="PRO_0000038759" description="Surface protein" evidence="1">
    <location>
        <begin position="21"/>
        <end position="312"/>
    </location>
</feature>
<feature type="chain" id="PRO_0000038760" description="Transmembrane protein" evidence="1">
    <location>
        <begin position="313"/>
        <end position="488"/>
    </location>
</feature>
<feature type="topological domain" description="Extracellular" evidence="2">
    <location>
        <begin position="21"/>
        <end position="442"/>
    </location>
</feature>
<feature type="transmembrane region" description="Helical" evidence="2">
    <location>
        <begin position="443"/>
        <end position="463"/>
    </location>
</feature>
<feature type="topological domain" description="Cytoplasmic" evidence="2">
    <location>
        <begin position="464"/>
        <end position="488"/>
    </location>
</feature>
<feature type="region of interest" description="Fusion peptide" evidence="2">
    <location>
        <begin position="313"/>
        <end position="333"/>
    </location>
</feature>
<feature type="region of interest" description="Immunosuppression" evidence="1">
    <location>
        <begin position="376"/>
        <end position="392"/>
    </location>
</feature>
<feature type="coiled-coil region" evidence="2">
    <location>
        <begin position="341"/>
        <end position="387"/>
    </location>
</feature>
<feature type="coiled-coil region" evidence="2">
    <location>
        <begin position="397"/>
        <end position="429"/>
    </location>
</feature>
<feature type="short sequence motif" description="CXXC">
    <location>
        <begin position="225"/>
        <end position="228"/>
    </location>
</feature>
<feature type="short sequence motif" description="CX6CC">
    <location>
        <begin position="393"/>
        <end position="401"/>
    </location>
</feature>
<feature type="site" description="Cleavage; by host furin" evidence="1">
    <location>
        <begin position="312"/>
        <end position="313"/>
    </location>
</feature>
<feature type="lipid moiety-binding region" description="S-palmitoyl cysteine; by host" evidence="1">
    <location>
        <position position="462"/>
    </location>
</feature>
<feature type="glycosylation site" description="N-linked (GlcNAc...) asparagine; by host" evidence="2">
    <location>
        <position position="140"/>
    </location>
</feature>
<feature type="glycosylation site" description="N-linked (GlcNAc...) asparagine; by host" evidence="2">
    <location>
        <position position="222"/>
    </location>
</feature>
<feature type="glycosylation site" description="N-linked (GlcNAc...) asparagine; by host" evidence="2">
    <location>
        <position position="244"/>
    </location>
</feature>
<feature type="glycosylation site" description="N-linked (GlcNAc...) asparagine; by host" evidence="2">
    <location>
        <position position="272"/>
    </location>
</feature>
<feature type="glycosylation site" description="N-linked (GlcNAc...) asparagine; by host" evidence="2">
    <location>
        <position position="404"/>
    </location>
</feature>
<feature type="disulfide bond" description="Interchain (between SU and TM chains, or C-228 with C-401); in linked form" evidence="1">
    <location>
        <begin position="225"/>
        <end position="401"/>
    </location>
</feature>
<feature type="disulfide bond" evidence="1">
    <location>
        <begin position="225"/>
        <end position="228"/>
    </location>
</feature>
<feature type="disulfide bond" evidence="1">
    <location>
        <begin position="393"/>
        <end position="400"/>
    </location>
</feature>